<comment type="function">
    <text evidence="4">Component of the nuclear tRNA export machinery that my collect tRNA from the nuclear tRNA export receptors of the aminoacylation-dependent export and may deliver aminoacylated tRNAs to the translation machinery pathway at the nuclear pore complex.</text>
</comment>
<comment type="subunit">
    <text evidence="4">Associates with the nuclear pore complex (NPC). Interacts with GSP1, LOS1, MSN5, NUP116 and TEF2.</text>
</comment>
<comment type="interaction">
    <interactant intactId="EBI-31271">
        <id>Q12453</id>
    </interactant>
    <interactant intactId="EBI-10188">
        <id>P33418</id>
        <label>LOS1</label>
    </interactant>
    <organismsDiffer>false</organismsDiffer>
    <experiments>2</experiments>
</comment>
<comment type="interaction">
    <interactant intactId="EBI-31271">
        <id>Q12453</id>
    </interactant>
    <interactant intactId="EBI-11703">
        <id>Q02630</id>
        <label>NUP116</label>
    </interactant>
    <organismsDiffer>false</organismsDiffer>
    <experiments>4</experiments>
</comment>
<comment type="subcellular location">
    <subcellularLocation>
        <location evidence="2">Cytoplasm</location>
    </subcellularLocation>
</comment>
<comment type="miscellaneous">
    <text evidence="3">Present with 1360 molecules/cell in log phase SD medium.</text>
</comment>
<keyword id="KW-0002">3D-structure</keyword>
<keyword id="KW-0963">Cytoplasm</keyword>
<keyword id="KW-0597">Phosphoprotein</keyword>
<keyword id="KW-1185">Reference proteome</keyword>
<keyword id="KW-0677">Repeat</keyword>
<accession>Q12453</accession>
<accession>D6W2H1</accession>
<protein>
    <recommendedName>
        <fullName>Cytoplasmic export protein 1</fullName>
    </recommendedName>
</protein>
<gene>
    <name type="primary">CEX1</name>
    <name type="ordered locus">YOR112W</name>
    <name type="ORF">O3240</name>
    <name type="ORF">YOR3240w</name>
</gene>
<feature type="chain" id="PRO_0000237655" description="Cytoplasmic export protein 1">
    <location>
        <begin position="1"/>
        <end position="761"/>
    </location>
</feature>
<feature type="repeat" description="HEAT 1">
    <location>
        <begin position="385"/>
        <end position="423"/>
    </location>
</feature>
<feature type="repeat" description="HEAT 2">
    <location>
        <begin position="498"/>
        <end position="534"/>
    </location>
</feature>
<feature type="region of interest" description="Disordered" evidence="1">
    <location>
        <begin position="660"/>
        <end position="692"/>
    </location>
</feature>
<feature type="region of interest" description="Disordered" evidence="1">
    <location>
        <begin position="714"/>
        <end position="761"/>
    </location>
</feature>
<feature type="compositionally biased region" description="Polar residues" evidence="1">
    <location>
        <begin position="680"/>
        <end position="692"/>
    </location>
</feature>
<feature type="compositionally biased region" description="Polar residues" evidence="1">
    <location>
        <begin position="714"/>
        <end position="737"/>
    </location>
</feature>
<feature type="compositionally biased region" description="Acidic residues" evidence="1">
    <location>
        <begin position="747"/>
        <end position="761"/>
    </location>
</feature>
<feature type="modified residue" description="Phosphoserine" evidence="5 6">
    <location>
        <position position="754"/>
    </location>
</feature>
<feature type="turn" evidence="7">
    <location>
        <begin position="10"/>
        <end position="12"/>
    </location>
</feature>
<feature type="strand" evidence="7">
    <location>
        <begin position="16"/>
        <end position="19"/>
    </location>
</feature>
<feature type="strand" evidence="7">
    <location>
        <begin position="24"/>
        <end position="26"/>
    </location>
</feature>
<feature type="strand" evidence="7">
    <location>
        <begin position="28"/>
        <end position="37"/>
    </location>
</feature>
<feature type="turn" evidence="7">
    <location>
        <begin position="38"/>
        <end position="40"/>
    </location>
</feature>
<feature type="strand" evidence="7">
    <location>
        <begin position="43"/>
        <end position="49"/>
    </location>
</feature>
<feature type="turn" evidence="7">
    <location>
        <begin position="53"/>
        <end position="55"/>
    </location>
</feature>
<feature type="helix" evidence="7">
    <location>
        <begin position="56"/>
        <end position="68"/>
    </location>
</feature>
<feature type="strand" evidence="7">
    <location>
        <begin position="77"/>
        <end position="81"/>
    </location>
</feature>
<feature type="strand" evidence="7">
    <location>
        <begin position="89"/>
        <end position="93"/>
    </location>
</feature>
<feature type="helix" evidence="7">
    <location>
        <begin position="100"/>
        <end position="102"/>
    </location>
</feature>
<feature type="helix" evidence="7">
    <location>
        <begin position="103"/>
        <end position="106"/>
    </location>
</feature>
<feature type="helix" evidence="7">
    <location>
        <begin position="110"/>
        <end position="126"/>
    </location>
</feature>
<feature type="turn" evidence="7">
    <location>
        <begin position="127"/>
        <end position="129"/>
    </location>
</feature>
<feature type="helix" evidence="7">
    <location>
        <begin position="137"/>
        <end position="139"/>
    </location>
</feature>
<feature type="strand" evidence="7">
    <location>
        <begin position="140"/>
        <end position="142"/>
    </location>
</feature>
<feature type="strand" evidence="7">
    <location>
        <begin position="148"/>
        <end position="150"/>
    </location>
</feature>
<feature type="strand" evidence="7">
    <location>
        <begin position="157"/>
        <end position="159"/>
    </location>
</feature>
<feature type="helix" evidence="7">
    <location>
        <begin position="164"/>
        <end position="178"/>
    </location>
</feature>
<feature type="turn" evidence="7">
    <location>
        <begin position="187"/>
        <end position="189"/>
    </location>
</feature>
<feature type="helix" evidence="7">
    <location>
        <begin position="190"/>
        <end position="202"/>
    </location>
</feature>
<feature type="turn" evidence="7">
    <location>
        <begin position="205"/>
        <end position="207"/>
    </location>
</feature>
<feature type="helix" evidence="7">
    <location>
        <begin position="210"/>
        <end position="212"/>
    </location>
</feature>
<feature type="helix" evidence="7">
    <location>
        <begin position="213"/>
        <end position="220"/>
    </location>
</feature>
<feature type="helix" evidence="7">
    <location>
        <begin position="226"/>
        <end position="235"/>
    </location>
</feature>
<feature type="helix" evidence="7">
    <location>
        <begin position="237"/>
        <end position="241"/>
    </location>
</feature>
<feature type="helix" evidence="7">
    <location>
        <begin position="243"/>
        <end position="252"/>
    </location>
</feature>
<feature type="helix" evidence="7">
    <location>
        <begin position="253"/>
        <end position="256"/>
    </location>
</feature>
<feature type="helix" evidence="7">
    <location>
        <begin position="259"/>
        <end position="275"/>
    </location>
</feature>
<feature type="helix" evidence="7">
    <location>
        <begin position="277"/>
        <end position="280"/>
    </location>
</feature>
<feature type="helix" evidence="7">
    <location>
        <begin position="287"/>
        <end position="290"/>
    </location>
</feature>
<feature type="helix" evidence="7">
    <location>
        <begin position="292"/>
        <end position="307"/>
    </location>
</feature>
<feature type="helix" evidence="7">
    <location>
        <begin position="322"/>
        <end position="324"/>
    </location>
</feature>
<feature type="helix" evidence="7">
    <location>
        <begin position="325"/>
        <end position="339"/>
    </location>
</feature>
<feature type="helix" evidence="7">
    <location>
        <begin position="346"/>
        <end position="355"/>
    </location>
</feature>
<feature type="helix" evidence="7">
    <location>
        <begin position="359"/>
        <end position="372"/>
    </location>
</feature>
<feature type="helix" evidence="7">
    <location>
        <begin position="378"/>
        <end position="384"/>
    </location>
</feature>
<feature type="helix" evidence="7">
    <location>
        <begin position="386"/>
        <end position="391"/>
    </location>
</feature>
<feature type="helix" evidence="7">
    <location>
        <begin position="392"/>
        <end position="394"/>
    </location>
</feature>
<feature type="helix" evidence="7">
    <location>
        <begin position="398"/>
        <end position="411"/>
    </location>
</feature>
<feature type="helix" evidence="7">
    <location>
        <begin position="412"/>
        <end position="414"/>
    </location>
</feature>
<feature type="helix" evidence="7">
    <location>
        <begin position="417"/>
        <end position="421"/>
    </location>
</feature>
<feature type="helix" evidence="7">
    <location>
        <begin position="423"/>
        <end position="431"/>
    </location>
</feature>
<feature type="helix" evidence="7">
    <location>
        <begin position="437"/>
        <end position="450"/>
    </location>
</feature>
<feature type="helix" evidence="7">
    <location>
        <begin position="451"/>
        <end position="453"/>
    </location>
</feature>
<feature type="strand" evidence="7">
    <location>
        <begin position="454"/>
        <end position="456"/>
    </location>
</feature>
<feature type="helix" evidence="7">
    <location>
        <begin position="458"/>
        <end position="473"/>
    </location>
</feature>
<feature type="helix" evidence="7">
    <location>
        <begin position="478"/>
        <end position="491"/>
    </location>
</feature>
<feature type="helix" evidence="7">
    <location>
        <begin position="492"/>
        <end position="494"/>
    </location>
</feature>
<feature type="helix" evidence="7">
    <location>
        <begin position="497"/>
        <end position="502"/>
    </location>
</feature>
<feature type="helix" evidence="7">
    <location>
        <begin position="504"/>
        <end position="508"/>
    </location>
</feature>
<feature type="helix" evidence="7">
    <location>
        <begin position="509"/>
        <end position="513"/>
    </location>
</feature>
<feature type="helix" evidence="7">
    <location>
        <begin position="517"/>
        <end position="540"/>
    </location>
</feature>
<dbReference type="EMBL" id="X94335">
    <property type="protein sequence ID" value="CAA64032.1"/>
    <property type="molecule type" value="Genomic_DNA"/>
</dbReference>
<dbReference type="EMBL" id="X90518">
    <property type="protein sequence ID" value="CAA62113.1"/>
    <property type="molecule type" value="Genomic_DNA"/>
</dbReference>
<dbReference type="EMBL" id="Z75020">
    <property type="protein sequence ID" value="CAA99310.1"/>
    <property type="molecule type" value="Genomic_DNA"/>
</dbReference>
<dbReference type="EMBL" id="BK006948">
    <property type="protein sequence ID" value="DAA10887.1"/>
    <property type="molecule type" value="Genomic_DNA"/>
</dbReference>
<dbReference type="PIR" id="S60992">
    <property type="entry name" value="S60992"/>
</dbReference>
<dbReference type="RefSeq" id="NP_014755.1">
    <property type="nucleotide sequence ID" value="NM_001183531.1"/>
</dbReference>
<dbReference type="PDB" id="3VWA">
    <property type="method" value="X-ray"/>
    <property type="resolution" value="2.20 A"/>
    <property type="chains" value="A/B=9-564"/>
</dbReference>
<dbReference type="PDBsum" id="3VWA"/>
<dbReference type="SMR" id="Q12453"/>
<dbReference type="BioGRID" id="34508">
    <property type="interactions" value="104"/>
</dbReference>
<dbReference type="DIP" id="DIP-4149N"/>
<dbReference type="FunCoup" id="Q12453">
    <property type="interactions" value="1292"/>
</dbReference>
<dbReference type="IntAct" id="Q12453">
    <property type="interactions" value="11"/>
</dbReference>
<dbReference type="MINT" id="Q12453"/>
<dbReference type="STRING" id="4932.YOR112W"/>
<dbReference type="GlyGen" id="Q12453">
    <property type="glycosylation" value="2 sites, 1 O-linked glycan (1 site)"/>
</dbReference>
<dbReference type="iPTMnet" id="Q12453"/>
<dbReference type="PaxDb" id="4932-YOR112W"/>
<dbReference type="PeptideAtlas" id="Q12453"/>
<dbReference type="EnsemblFungi" id="YOR112W_mRNA">
    <property type="protein sequence ID" value="YOR112W"/>
    <property type="gene ID" value="YOR112W"/>
</dbReference>
<dbReference type="GeneID" id="854279"/>
<dbReference type="KEGG" id="sce:YOR112W"/>
<dbReference type="AGR" id="SGD:S000005638"/>
<dbReference type="SGD" id="S000005638">
    <property type="gene designation" value="CEX1"/>
</dbReference>
<dbReference type="VEuPathDB" id="FungiDB:YOR112W"/>
<dbReference type="eggNOG" id="KOG1243">
    <property type="taxonomic scope" value="Eukaryota"/>
</dbReference>
<dbReference type="GeneTree" id="ENSGT00930000151054"/>
<dbReference type="HOGENOM" id="CLU_010392_2_0_1"/>
<dbReference type="InParanoid" id="Q12453"/>
<dbReference type="OMA" id="RTWTVII"/>
<dbReference type="OrthoDB" id="447103at2759"/>
<dbReference type="BioCyc" id="YEAST:G3O-33641-MONOMER"/>
<dbReference type="BioGRID-ORCS" id="854279">
    <property type="hits" value="0 hits in 10 CRISPR screens"/>
</dbReference>
<dbReference type="EvolutionaryTrace" id="Q12453"/>
<dbReference type="PRO" id="PR:Q12453"/>
<dbReference type="Proteomes" id="UP000002311">
    <property type="component" value="Chromosome XV"/>
</dbReference>
<dbReference type="RNAct" id="Q12453">
    <property type="molecule type" value="protein"/>
</dbReference>
<dbReference type="GO" id="GO:0005737">
    <property type="term" value="C:cytoplasm"/>
    <property type="evidence" value="ECO:0000314"/>
    <property type="project" value="SGD"/>
</dbReference>
<dbReference type="GO" id="GO:0005643">
    <property type="term" value="C:nuclear pore"/>
    <property type="evidence" value="ECO:0000314"/>
    <property type="project" value="SGD"/>
</dbReference>
<dbReference type="GO" id="GO:0000049">
    <property type="term" value="F:tRNA binding"/>
    <property type="evidence" value="ECO:0000314"/>
    <property type="project" value="SGD"/>
</dbReference>
<dbReference type="GO" id="GO:0006890">
    <property type="term" value="P:retrograde vesicle-mediated transport, Golgi to endoplasmic reticulum"/>
    <property type="evidence" value="ECO:0000315"/>
    <property type="project" value="SGD"/>
</dbReference>
<dbReference type="GO" id="GO:0006409">
    <property type="term" value="P:tRNA export from nucleus"/>
    <property type="evidence" value="ECO:0000315"/>
    <property type="project" value="SGD"/>
</dbReference>
<dbReference type="Gene3D" id="1.25.10.10">
    <property type="entry name" value="Leucine-rich Repeat Variant"/>
    <property type="match status" value="1"/>
</dbReference>
<dbReference type="Gene3D" id="3.30.200.20">
    <property type="entry name" value="Phosphorylase Kinase, domain 1"/>
    <property type="match status" value="1"/>
</dbReference>
<dbReference type="Gene3D" id="1.10.510.10">
    <property type="entry name" value="Transferase(Phosphotransferase) domain 1"/>
    <property type="match status" value="1"/>
</dbReference>
<dbReference type="InterPro" id="IPR011989">
    <property type="entry name" value="ARM-like"/>
</dbReference>
<dbReference type="InterPro" id="IPR016024">
    <property type="entry name" value="ARM-type_fold"/>
</dbReference>
<dbReference type="InterPro" id="IPR051177">
    <property type="entry name" value="CIK-Related_Protein"/>
</dbReference>
<dbReference type="PANTHER" id="PTHR12984:SF3">
    <property type="entry name" value="N-TERMINAL KINASE-LIKE PROTEIN"/>
    <property type="match status" value="1"/>
</dbReference>
<dbReference type="PANTHER" id="PTHR12984">
    <property type="entry name" value="SCY1-RELATED S/T PROTEIN KINASE-LIKE"/>
    <property type="match status" value="1"/>
</dbReference>
<dbReference type="SUPFAM" id="SSF48371">
    <property type="entry name" value="ARM repeat"/>
    <property type="match status" value="1"/>
</dbReference>
<name>CEX1_YEAST</name>
<reference key="1">
    <citation type="journal article" date="1997" name="Yeast">
        <title>DNA sequencing and analysis of 130 kb from yeast chromosome XV.</title>
        <authorList>
            <person name="Voss H."/>
            <person name="Benes V."/>
            <person name="Andrade M.A."/>
            <person name="Valencia A."/>
            <person name="Rechmann S."/>
            <person name="Teodoru C."/>
            <person name="Schwager C."/>
            <person name="Paces V."/>
            <person name="Sander C."/>
            <person name="Ansorge W."/>
        </authorList>
    </citation>
    <scope>NUCLEOTIDE SEQUENCE [GENOMIC DNA]</scope>
    <source>
        <strain>ATCC 96604 / S288c / FY1679</strain>
    </source>
</reference>
<reference key="2">
    <citation type="journal article" date="1996" name="Yeast">
        <title>Sequencing and analysis of 51 kb on the right arm of chromosome XV from Saccharomyces cerevisiae reveals 30 open reading frames.</title>
        <authorList>
            <person name="Wiemann S."/>
            <person name="Rechmann S."/>
            <person name="Benes V."/>
            <person name="Voss H."/>
            <person name="Schwager C."/>
            <person name="Vlcek C."/>
            <person name="Stegemann J."/>
            <person name="Zimmermann J."/>
            <person name="Erfle H."/>
            <person name="Paces V."/>
            <person name="Ansorge W."/>
        </authorList>
    </citation>
    <scope>NUCLEOTIDE SEQUENCE [GENOMIC DNA]</scope>
    <source>
        <strain>ATCC 96604 / S288c / FY1679</strain>
    </source>
</reference>
<reference key="3">
    <citation type="journal article" date="1997" name="Nature">
        <title>The nucleotide sequence of Saccharomyces cerevisiae chromosome XV.</title>
        <authorList>
            <person name="Dujon B."/>
            <person name="Albermann K."/>
            <person name="Aldea M."/>
            <person name="Alexandraki D."/>
            <person name="Ansorge W."/>
            <person name="Arino J."/>
            <person name="Benes V."/>
            <person name="Bohn C."/>
            <person name="Bolotin-Fukuhara M."/>
            <person name="Bordonne R."/>
            <person name="Boyer J."/>
            <person name="Camasses A."/>
            <person name="Casamayor A."/>
            <person name="Casas C."/>
            <person name="Cheret G."/>
            <person name="Cziepluch C."/>
            <person name="Daignan-Fornier B."/>
            <person name="Dang V.-D."/>
            <person name="de Haan M."/>
            <person name="Delius H."/>
            <person name="Durand P."/>
            <person name="Fairhead C."/>
            <person name="Feldmann H."/>
            <person name="Gaillon L."/>
            <person name="Galisson F."/>
            <person name="Gamo F.-J."/>
            <person name="Gancedo C."/>
            <person name="Goffeau A."/>
            <person name="Goulding S.E."/>
            <person name="Grivell L.A."/>
            <person name="Habbig B."/>
            <person name="Hand N.J."/>
            <person name="Hani J."/>
            <person name="Hattenhorst U."/>
            <person name="Hebling U."/>
            <person name="Hernando Y."/>
            <person name="Herrero E."/>
            <person name="Heumann K."/>
            <person name="Hiesel R."/>
            <person name="Hilger F."/>
            <person name="Hofmann B."/>
            <person name="Hollenberg C.P."/>
            <person name="Hughes B."/>
            <person name="Jauniaux J.-C."/>
            <person name="Kalogeropoulos A."/>
            <person name="Katsoulou C."/>
            <person name="Kordes E."/>
            <person name="Lafuente M.J."/>
            <person name="Landt O."/>
            <person name="Louis E.J."/>
            <person name="Maarse A.C."/>
            <person name="Madania A."/>
            <person name="Mannhaupt G."/>
            <person name="Marck C."/>
            <person name="Martin R.P."/>
            <person name="Mewes H.-W."/>
            <person name="Michaux G."/>
            <person name="Paces V."/>
            <person name="Parle-McDermott A.G."/>
            <person name="Pearson B.M."/>
            <person name="Perrin A."/>
            <person name="Pettersson B."/>
            <person name="Poch O."/>
            <person name="Pohl T.M."/>
            <person name="Poirey R."/>
            <person name="Portetelle D."/>
            <person name="Pujol A."/>
            <person name="Purnelle B."/>
            <person name="Ramezani Rad M."/>
            <person name="Rechmann S."/>
            <person name="Schwager C."/>
            <person name="Schweizer M."/>
            <person name="Sor F."/>
            <person name="Sterky F."/>
            <person name="Tarassov I.A."/>
            <person name="Teodoru C."/>
            <person name="Tettelin H."/>
            <person name="Thierry A."/>
            <person name="Tobiasch E."/>
            <person name="Tzermia M."/>
            <person name="Uhlen M."/>
            <person name="Unseld M."/>
            <person name="Valens M."/>
            <person name="Vandenbol M."/>
            <person name="Vetter I."/>
            <person name="Vlcek C."/>
            <person name="Voet M."/>
            <person name="Volckaert G."/>
            <person name="Voss H."/>
            <person name="Wambutt R."/>
            <person name="Wedler H."/>
            <person name="Wiemann S."/>
            <person name="Winsor B."/>
            <person name="Wolfe K.H."/>
            <person name="Zollner A."/>
            <person name="Zumstein E."/>
            <person name="Kleine K."/>
        </authorList>
    </citation>
    <scope>NUCLEOTIDE SEQUENCE [LARGE SCALE GENOMIC DNA]</scope>
    <source>
        <strain>ATCC 204508 / S288c</strain>
    </source>
</reference>
<reference key="4">
    <citation type="journal article" date="2014" name="G3 (Bethesda)">
        <title>The reference genome sequence of Saccharomyces cerevisiae: Then and now.</title>
        <authorList>
            <person name="Engel S.R."/>
            <person name="Dietrich F.S."/>
            <person name="Fisk D.G."/>
            <person name="Binkley G."/>
            <person name="Balakrishnan R."/>
            <person name="Costanzo M.C."/>
            <person name="Dwight S.S."/>
            <person name="Hitz B.C."/>
            <person name="Karra K."/>
            <person name="Nash R.S."/>
            <person name="Weng S."/>
            <person name="Wong E.D."/>
            <person name="Lloyd P."/>
            <person name="Skrzypek M.S."/>
            <person name="Miyasato S.R."/>
            <person name="Simison M."/>
            <person name="Cherry J.M."/>
        </authorList>
    </citation>
    <scope>GENOME REANNOTATION</scope>
    <source>
        <strain>ATCC 204508 / S288c</strain>
    </source>
</reference>
<reference key="5">
    <citation type="journal article" date="2003" name="Nature">
        <title>Global analysis of protein localization in budding yeast.</title>
        <authorList>
            <person name="Huh W.-K."/>
            <person name="Falvo J.V."/>
            <person name="Gerke L.C."/>
            <person name="Carroll A.S."/>
            <person name="Howson R.W."/>
            <person name="Weissman J.S."/>
            <person name="O'Shea E.K."/>
        </authorList>
    </citation>
    <scope>SUBCELLULAR LOCATION [LARGE SCALE ANALYSIS]</scope>
</reference>
<reference key="6">
    <citation type="journal article" date="2003" name="Nature">
        <title>Global analysis of protein expression in yeast.</title>
        <authorList>
            <person name="Ghaemmaghami S."/>
            <person name="Huh W.-K."/>
            <person name="Bower K."/>
            <person name="Howson R.W."/>
            <person name="Belle A."/>
            <person name="Dephoure N."/>
            <person name="O'Shea E.K."/>
            <person name="Weissman J.S."/>
        </authorList>
    </citation>
    <scope>LEVEL OF PROTEIN EXPRESSION [LARGE SCALE ANALYSIS]</scope>
</reference>
<reference key="7">
    <citation type="journal article" date="2007" name="EMBO J.">
        <title>Cex1p is a novel cytoplasmic component of the Saccharomyces cerevisiae nuclear tRNA export machinery.</title>
        <authorList>
            <person name="McGuire A.T."/>
            <person name="Mangroo D."/>
        </authorList>
    </citation>
    <scope>FUNCTION</scope>
    <scope>TRNA-BINDING</scope>
    <scope>ASSOCIATION WITH THE NUCLEAR PORE COMPLEX</scope>
    <scope>INTERACTION WITH GSP1; LOS1; MSN5; NUPP116 AND TEF2</scope>
</reference>
<reference key="8">
    <citation type="journal article" date="2007" name="J. Proteome Res.">
        <title>Large-scale phosphorylation analysis of alpha-factor-arrested Saccharomyces cerevisiae.</title>
        <authorList>
            <person name="Li X."/>
            <person name="Gerber S.A."/>
            <person name="Rudner A.D."/>
            <person name="Beausoleil S.A."/>
            <person name="Haas W."/>
            <person name="Villen J."/>
            <person name="Elias J.E."/>
            <person name="Gygi S.P."/>
        </authorList>
    </citation>
    <scope>PHOSPHORYLATION [LARGE SCALE ANALYSIS] AT SER-754</scope>
    <scope>IDENTIFICATION BY MASS SPECTROMETRY [LARGE SCALE ANALYSIS]</scope>
    <source>
        <strain>ADR376</strain>
    </source>
</reference>
<reference key="9">
    <citation type="journal article" date="2009" name="Science">
        <title>Global analysis of Cdk1 substrate phosphorylation sites provides insights into evolution.</title>
        <authorList>
            <person name="Holt L.J."/>
            <person name="Tuch B.B."/>
            <person name="Villen J."/>
            <person name="Johnson A.D."/>
            <person name="Gygi S.P."/>
            <person name="Morgan D.O."/>
        </authorList>
    </citation>
    <scope>PHOSPHORYLATION [LARGE SCALE ANALYSIS] AT SER-754</scope>
    <scope>IDENTIFICATION BY MASS SPECTROMETRY [LARGE SCALE ANALYSIS]</scope>
</reference>
<organism>
    <name type="scientific">Saccharomyces cerevisiae (strain ATCC 204508 / S288c)</name>
    <name type="common">Baker's yeast</name>
    <dbReference type="NCBI Taxonomy" id="559292"/>
    <lineage>
        <taxon>Eukaryota</taxon>
        <taxon>Fungi</taxon>
        <taxon>Dikarya</taxon>
        <taxon>Ascomycota</taxon>
        <taxon>Saccharomycotina</taxon>
        <taxon>Saccharomycetes</taxon>
        <taxon>Saccharomycetales</taxon>
        <taxon>Saccharomycetaceae</taxon>
        <taxon>Saccharomyces</taxon>
    </lineage>
</organism>
<proteinExistence type="evidence at protein level"/>
<evidence type="ECO:0000256" key="1">
    <source>
        <dbReference type="SAM" id="MobiDB-lite"/>
    </source>
</evidence>
<evidence type="ECO:0000269" key="2">
    <source>
    </source>
</evidence>
<evidence type="ECO:0000269" key="3">
    <source>
    </source>
</evidence>
<evidence type="ECO:0000269" key="4">
    <source>
    </source>
</evidence>
<evidence type="ECO:0007744" key="5">
    <source>
    </source>
</evidence>
<evidence type="ECO:0007744" key="6">
    <source>
    </source>
</evidence>
<evidence type="ECO:0007829" key="7">
    <source>
        <dbReference type="PDB" id="3VWA"/>
    </source>
</evidence>
<sequence length="761" mass="84769">MNFSSIFKSISNFQFPYTIEETAITETALWQCFDGTRKADSLPVTVFKAKRSPENESLILNAVHKSKILKIPGLCTVLETFDSDPQSTFIVTERVVPFPWDNLGSLSQNKFGVELGISQLLATLGFLKNFVLGTLSKDSVFINIKGEWVLFGLELCSSKEGLSAFEFASRARSYYNIIGSQLPCEDPNTIDSMGLGLLIKSLMAPSCLPKDWIVNVNMISDGKITIENFRKRLENTETWRSNPLINFYQELRELHIKDPQGKLVVMSNLENLYLESREIFRNLTPGMIENFIIPELCEIIKLLMTQSISSAASPIGMNFNASHKLVPFLAIVLDLTSETNTFPVGFNDLITQSFKLPDRQVRFLLLIYLPKLIGPLSKSEISSRIYPHFIQGLTDSDATLRLQTLKTIPCIVSCLTERQLNNELLRFLAKTQVDSDVEIRTWTVIIISKISTILSTSVGNRSNILATAFTKSLKDPQVKPRLAALYGLEKSIELFDVNTIANKILTVIAPGLLDKSPIVRGRAKILFEEYLEKLEKEAQLIQTNDSTADSEDVKDIDFENYGCDEEDMNKEDNLLAAQFLNNLRLNSPSATTPSNITESEIDSAQDGSGWDDLSDTDGFITNGTTESFDETTNPVTTASTPKLFGKPIKINKSWNDELNDDGWIQDESGPSKVPQKHTRPQNSTLAKSIAPSSRLSIKKKKTTILAPRNIASNSTVTTKSSLSNKTARSKPISSIRGSVTKKGNVDGWDDDGDSDSWDTNW</sequence>